<evidence type="ECO:0000255" key="1">
    <source>
        <dbReference type="PROSITE-ProRule" id="PRU00279"/>
    </source>
</evidence>
<evidence type="ECO:0000255" key="2">
    <source>
        <dbReference type="PROSITE-ProRule" id="PRU00683"/>
    </source>
</evidence>
<evidence type="ECO:0000269" key="3">
    <source>
    </source>
</evidence>
<evidence type="ECO:0000269" key="4">
    <source>
    </source>
</evidence>
<evidence type="ECO:0000269" key="5">
    <source>
    </source>
</evidence>
<evidence type="ECO:0000269" key="6">
    <source>
    </source>
</evidence>
<evidence type="ECO:0000269" key="7">
    <source>
    </source>
</evidence>
<evidence type="ECO:0000269" key="8">
    <source>
    </source>
</evidence>
<evidence type="ECO:0000269" key="9">
    <source>
    </source>
</evidence>
<evidence type="ECO:0000269" key="10">
    <source>
    </source>
</evidence>
<evidence type="ECO:0000269" key="11">
    <source>
    </source>
</evidence>
<evidence type="ECO:0000269" key="12">
    <source>
    </source>
</evidence>
<evidence type="ECO:0000303" key="13">
    <source>
    </source>
</evidence>
<evidence type="ECO:0000303" key="14">
    <source>
    </source>
</evidence>
<evidence type="ECO:0000303" key="15">
    <source>
    </source>
</evidence>
<evidence type="ECO:0000303" key="16">
    <source>
    </source>
</evidence>
<evidence type="ECO:0000305" key="17"/>
<evidence type="ECO:0000305" key="18">
    <source>
    </source>
</evidence>
<evidence type="ECO:0000305" key="19">
    <source>
    </source>
</evidence>
<evidence type="ECO:0000305" key="20">
    <source>
    </source>
</evidence>
<evidence type="ECO:0007744" key="21">
    <source>
        <dbReference type="PDB" id="1FCB"/>
    </source>
</evidence>
<evidence type="ECO:0007744" key="22">
    <source>
        <dbReference type="PDB" id="1KBI"/>
    </source>
</evidence>
<evidence type="ECO:0007744" key="23">
    <source>
        <dbReference type="PDB" id="1KBJ"/>
    </source>
</evidence>
<evidence type="ECO:0007744" key="24">
    <source>
        <dbReference type="PDB" id="2OZ0"/>
    </source>
</evidence>
<evidence type="ECO:0007829" key="25">
    <source>
        <dbReference type="PDB" id="1FCB"/>
    </source>
</evidence>
<evidence type="ECO:0007829" key="26">
    <source>
        <dbReference type="PDB" id="1KBI"/>
    </source>
</evidence>
<evidence type="ECO:0007829" key="27">
    <source>
        <dbReference type="PDB" id="1LDC"/>
    </source>
</evidence>
<evidence type="ECO:0007829" key="28">
    <source>
        <dbReference type="PDB" id="1LTD"/>
    </source>
</evidence>
<reference key="1">
    <citation type="journal article" date="1985" name="EMBO J.">
        <title>Structure, expression and regulation of a nuclear gene encoding a mitochondrial protein: the yeast L(+)-lactate cytochrome c oxidoreductase (cytochrome b2).</title>
        <authorList>
            <person name="Guiard B."/>
        </authorList>
    </citation>
    <scope>NUCLEOTIDE SEQUENCE [GENOMIC DNA]</scope>
    <scope>FUNCTION</scope>
    <scope>CATALYTIC ACTIVITY</scope>
    <scope>DISRUPTION PHENOTYPE</scope>
</reference>
<reference key="2">
    <citation type="journal article" date="1997" name="Nature">
        <title>The nucleotide sequence of Saccharomyces cerevisiae chromosome XIII.</title>
        <authorList>
            <person name="Bowman S."/>
            <person name="Churcher C.M."/>
            <person name="Badcock K."/>
            <person name="Brown D."/>
            <person name="Chillingworth T."/>
            <person name="Connor R."/>
            <person name="Dedman K."/>
            <person name="Devlin K."/>
            <person name="Gentles S."/>
            <person name="Hamlin N."/>
            <person name="Hunt S."/>
            <person name="Jagels K."/>
            <person name="Lye G."/>
            <person name="Moule S."/>
            <person name="Odell C."/>
            <person name="Pearson D."/>
            <person name="Rajandream M.A."/>
            <person name="Rice P."/>
            <person name="Skelton J."/>
            <person name="Walsh S.V."/>
            <person name="Whitehead S."/>
            <person name="Barrell B.G."/>
        </authorList>
    </citation>
    <scope>NUCLEOTIDE SEQUENCE [LARGE SCALE GENOMIC DNA]</scope>
    <source>
        <strain>ATCC 204508 / S288c</strain>
    </source>
</reference>
<reference key="3">
    <citation type="journal article" date="2014" name="G3 (Bethesda)">
        <title>The reference genome sequence of Saccharomyces cerevisiae: Then and now.</title>
        <authorList>
            <person name="Engel S.R."/>
            <person name="Dietrich F.S."/>
            <person name="Fisk D.G."/>
            <person name="Binkley G."/>
            <person name="Balakrishnan R."/>
            <person name="Costanzo M.C."/>
            <person name="Dwight S.S."/>
            <person name="Hitz B.C."/>
            <person name="Karra K."/>
            <person name="Nash R.S."/>
            <person name="Weng S."/>
            <person name="Wong E.D."/>
            <person name="Lloyd P."/>
            <person name="Skrzypek M.S."/>
            <person name="Miyasato S.R."/>
            <person name="Simison M."/>
            <person name="Cherry J.M."/>
        </authorList>
    </citation>
    <scope>GENOME REANNOTATION</scope>
    <source>
        <strain>ATCC 204508 / S288c</strain>
    </source>
</reference>
<reference key="4">
    <citation type="journal article" date="1984" name="Eur. J. Biochem.">
        <title>Primary structure of flavocytochrome b2 from baker's yeast. Purification by reverse-phase high-pressure liquid chromatography and sequencing of fragment alpha cyanogen bromide peptides.</title>
        <authorList>
            <person name="Ghrir R."/>
            <person name="Becam A.-M."/>
            <person name="Lederer F."/>
        </authorList>
    </citation>
    <scope>PROTEIN SEQUENCE OF 81-394</scope>
</reference>
<reference key="5">
    <citation type="journal article" date="1985" name="Eur. J. Biochem.">
        <title>Complete amino acid sequence of flavocytochrome b2 from baker's yeast.</title>
        <authorList>
            <person name="Lederer F."/>
            <person name="Cortial S."/>
            <person name="Becam A.-M."/>
            <person name="Haumont P.-Y."/>
            <person name="Perez L."/>
        </authorList>
    </citation>
    <scope>PROTEIN SEQUENCE OF 395-591</scope>
</reference>
<reference key="6">
    <citation type="journal article" date="1975" name="Nature">
        <title>More similarity between bakers'yeast L-(+)-lactate dehydrogenase and liver microsomal sytochrome B5.</title>
        <authorList>
            <person name="Guiard B."/>
            <person name="Lederer F."/>
            <person name="Jacq C."/>
        </authorList>
    </citation>
    <scope>PROTEIN SEQUENCE OF 81-94</scope>
</reference>
<reference key="7">
    <citation type="journal article" date="2001" name="Biochemistry">
        <title>Yeast mitochondrial dehydrogenases are associated in a supramolecular complex.</title>
        <authorList>
            <person name="Grandier-Vazeille X."/>
            <person name="Bathany K."/>
            <person name="Chaignepain S."/>
            <person name="Camougrand N."/>
            <person name="Manon S."/>
            <person name="Schmitter J.-M."/>
        </authorList>
    </citation>
    <scope>PROTEIN SEQUENCE OF 83-88 AND 564-570</scope>
    <scope>SUBCELLULAR LOCATION</scope>
    <source>
        <strain>ATCC 201238 / W303-1B</strain>
    </source>
</reference>
<reference key="8">
    <citation type="journal article" date="1976" name="Biochimie">
        <title>Complete amino acid sequence of the heme-binding core in bakers' yeast cytochrome b2 (L-(+)-lactate dehydrogenase).</title>
        <authorList>
            <person name="Guiard B."/>
            <person name="Lederer F."/>
        </authorList>
    </citation>
    <scope>PROTEIN SEQUENCE OF 88-183</scope>
</reference>
<reference key="9">
    <citation type="journal article" date="1974" name="Eur. J. Biochem.">
        <title>Cytochrome b2 from bakers' yeast (L-lactate dehydrogenase). A double-headed enzyme.</title>
        <authorList>
            <person name="Jacq C."/>
            <person name="Lederer F."/>
        </authorList>
    </citation>
    <scope>FUNCTION</scope>
    <scope>CATALYTIC ACTIVITY</scope>
    <scope>SUBUNIT</scope>
</reference>
<reference key="10">
    <citation type="journal article" date="2003" name="Nature">
        <title>Global analysis of protein expression in yeast.</title>
        <authorList>
            <person name="Ghaemmaghami S."/>
            <person name="Huh W.-K."/>
            <person name="Bower K."/>
            <person name="Howson R.W."/>
            <person name="Belle A."/>
            <person name="Dephoure N."/>
            <person name="O'Shea E.K."/>
            <person name="Weissman J.S."/>
        </authorList>
    </citation>
    <scope>LEVEL OF PROTEIN EXPRESSION [LARGE SCALE ANALYSIS]</scope>
</reference>
<reference key="11">
    <citation type="journal article" date="2012" name="Mol. Cell. Proteomics">
        <title>Intermembrane space proteome of yeast mitochondria.</title>
        <authorList>
            <person name="Voegtle F.N."/>
            <person name="Burkhart J.M."/>
            <person name="Rao S."/>
            <person name="Gerbeth C."/>
            <person name="Hinrichs J."/>
            <person name="Martinou J.C."/>
            <person name="Chacinska A."/>
            <person name="Sickmann A."/>
            <person name="Zahedi R.P."/>
            <person name="Meisinger C."/>
        </authorList>
    </citation>
    <scope>IDENTIFICATION BY MASS SPECTROMETRY</scope>
    <scope>SUBCELLULAR LOCATION [LARGE SCALE ANALYSIS]</scope>
</reference>
<reference evidence="21" key="12">
    <citation type="journal article" date="1990" name="J. Mol. Biol.">
        <title>Molecular structure of flavocytochrome b2 at 2.4-A resolution.</title>
        <authorList>
            <person name="Xia Z.-X."/>
            <person name="Mathews F.S."/>
        </authorList>
    </citation>
    <scope>X-RAY CRYSTALLOGRAPHY (2.4 ANGSTROMS) OF 81-591 IN COMPLEX WITH FMN; HEME B AND PYRUVATE</scope>
    <scope>COFACTOR</scope>
    <scope>DOMAIN</scope>
</reference>
<reference evidence="22 23" key="13">
    <citation type="journal article" date="2002" name="Biochemistry">
        <title>Crystallographic study of the recombinant flavin-binding domain of Baker's yeast flavocytochrome b(2): comparison with the intact wild-type enzyme.</title>
        <authorList>
            <person name="Cunane L.M."/>
            <person name="Barton J.D."/>
            <person name="Chen Z.-W."/>
            <person name="Welsh F.E."/>
            <person name="Chapman S.K."/>
            <person name="Reid G.A."/>
            <person name="Mathews F.S."/>
        </authorList>
    </citation>
    <scope>X-RAY CRYSTALLOGRAPHY (2.5 ANGSTROMS) OF 81-591 IN COMPLEXES WITH FMN; HEME B AND PYRUVATE</scope>
    <scope>FUNCTION</scope>
    <scope>CATALYTIC ACTIVITY</scope>
    <scope>BIOPHYSICOCHEMICAL PROPERTIES</scope>
    <scope>DOMAIN</scope>
</reference>
<reference evidence="24" key="14">
    <citation type="journal article" date="2007" name="Biochemistry">
        <title>Mechanistic and structural studies of H373Q flavocytochrome b2: effects of mutating the active site base.</title>
        <authorList>
            <person name="Tsai C.L."/>
            <person name="Gokulan K."/>
            <person name="Sobrado P."/>
            <person name="Sacchettini J.C."/>
            <person name="Fitzpatrick P.F."/>
        </authorList>
    </citation>
    <scope>X-RAY CRYSTALLOGRAPHY (2.80 ANGSTROMS) OF 81-591 OF MUTANT GLN-453 IN COMPLEX WITH FMN; HEME B AND PYRUVATE</scope>
    <scope>COFACTOR</scope>
    <scope>ACTIVE SITE</scope>
    <scope>REACTION MECHANISM</scope>
    <scope>MUTAGENESIS OF HIS-453</scope>
</reference>
<keyword id="KW-0002">3D-structure</keyword>
<keyword id="KW-0903">Direct protein sequencing</keyword>
<keyword id="KW-0249">Electron transport</keyword>
<keyword id="KW-0285">Flavoprotein</keyword>
<keyword id="KW-0288">FMN</keyword>
<keyword id="KW-0349">Heme</keyword>
<keyword id="KW-0408">Iron</keyword>
<keyword id="KW-0479">Metal-binding</keyword>
<keyword id="KW-0496">Mitochondrion</keyword>
<keyword id="KW-0560">Oxidoreductase</keyword>
<keyword id="KW-1185">Reference proteome</keyword>
<keyword id="KW-0679">Respiratory chain</keyword>
<keyword id="KW-0809">Transit peptide</keyword>
<keyword id="KW-0813">Transport</keyword>
<accession>P00175</accession>
<accession>D6VZC0</accession>
<feature type="transit peptide" description="Mitochondrion" evidence="6 12">
    <location>
        <begin position="1"/>
        <end position="80"/>
    </location>
</feature>
<feature type="chain" id="PRO_0000006480" description="L-lactate dehydrogenase (cytochrome)">
    <location>
        <begin position="81"/>
        <end position="591"/>
    </location>
</feature>
<feature type="domain" description="Cytochrome b5 heme-binding" evidence="1">
    <location>
        <begin position="88"/>
        <end position="165"/>
    </location>
</feature>
<feature type="domain" description="FMN hydroxy acid dehydrogenase" evidence="2">
    <location>
        <begin position="197"/>
        <end position="563"/>
    </location>
</feature>
<feature type="active site" description="Proton acceptor" evidence="18">
    <location>
        <position position="453"/>
    </location>
</feature>
<feature type="binding site" description="axial binding residue" evidence="4 9 21 22">
    <location>
        <position position="123"/>
    </location>
    <ligand>
        <name>heme b</name>
        <dbReference type="ChEBI" id="CHEBI:60344"/>
    </ligand>
    <ligandPart>
        <name>Fe</name>
        <dbReference type="ChEBI" id="CHEBI:18248"/>
    </ligandPart>
</feature>
<feature type="binding site" description="axial binding residue" evidence="4 9 21 22">
    <location>
        <position position="146"/>
    </location>
    <ligand>
        <name>heme b</name>
        <dbReference type="ChEBI" id="CHEBI:60344"/>
    </ligand>
    <ligandPart>
        <name>Fe</name>
        <dbReference type="ChEBI" id="CHEBI:18248"/>
    </ligandPart>
</feature>
<feature type="binding site" evidence="4 9 21 22">
    <location>
        <position position="177"/>
    </location>
    <ligand>
        <name>heme b</name>
        <dbReference type="ChEBI" id="CHEBI:60344"/>
    </ligand>
</feature>
<feature type="binding site" evidence="4 22">
    <location>
        <position position="219"/>
    </location>
    <ligand>
        <name>heme b</name>
        <dbReference type="ChEBI" id="CHEBI:60344"/>
    </ligand>
</feature>
<feature type="binding site" evidence="4 9 21 22">
    <location>
        <position position="223"/>
    </location>
    <ligand>
        <name>heme b</name>
        <dbReference type="ChEBI" id="CHEBI:60344"/>
    </ligand>
</feature>
<feature type="binding site" evidence="4 9 21 22">
    <location>
        <position position="223"/>
    </location>
    <ligand>
        <name>pyruvate</name>
        <dbReference type="ChEBI" id="CHEBI:15361"/>
    </ligand>
</feature>
<feature type="binding site" evidence="4 9 21 22">
    <location>
        <begin position="275"/>
        <end position="278"/>
    </location>
    <ligand>
        <name>FMN</name>
        <dbReference type="ChEBI" id="CHEBI:58210"/>
    </ligand>
</feature>
<feature type="binding site" evidence="4 9 21 22">
    <location>
        <position position="308"/>
    </location>
    <ligand>
        <name>FMN</name>
        <dbReference type="ChEBI" id="CHEBI:58210"/>
    </ligand>
</feature>
<feature type="binding site" evidence="4 9 21 22">
    <location>
        <position position="332"/>
    </location>
    <ligand>
        <name>FMN</name>
        <dbReference type="ChEBI" id="CHEBI:58210"/>
    </ligand>
</feature>
<feature type="binding site" evidence="4 9 21 22">
    <location>
        <position position="334"/>
    </location>
    <ligand>
        <name>pyruvate</name>
        <dbReference type="ChEBI" id="CHEBI:15361"/>
    </ligand>
</feature>
<feature type="binding site" evidence="4 9 21 22">
    <location>
        <position position="360"/>
    </location>
    <ligand>
        <name>FMN</name>
        <dbReference type="ChEBI" id="CHEBI:58210"/>
    </ligand>
</feature>
<feature type="binding site" evidence="4 22">
    <location>
        <position position="376"/>
    </location>
    <ligand>
        <name>heme b</name>
        <dbReference type="ChEBI" id="CHEBI:60344"/>
    </ligand>
</feature>
<feature type="binding site" evidence="4 9 21 22">
    <location>
        <position position="429"/>
    </location>
    <ligand>
        <name>FMN</name>
        <dbReference type="ChEBI" id="CHEBI:58210"/>
    </ligand>
</feature>
<feature type="binding site" evidence="4 9 21 22">
    <location>
        <position position="453"/>
    </location>
    <ligand>
        <name>pyruvate</name>
        <dbReference type="ChEBI" id="CHEBI:15361"/>
    </ligand>
</feature>
<feature type="binding site" evidence="4 9 21 22">
    <location>
        <position position="456"/>
    </location>
    <ligand>
        <name>pyruvate</name>
        <dbReference type="ChEBI" id="CHEBI:15361"/>
    </ligand>
</feature>
<feature type="binding site" evidence="4 9 21 22">
    <location>
        <begin position="489"/>
        <end position="493"/>
    </location>
    <ligand>
        <name>FMN</name>
        <dbReference type="ChEBI" id="CHEBI:58210"/>
    </ligand>
</feature>
<feature type="binding site" evidence="4 9 21 22">
    <location>
        <begin position="512"/>
        <end position="513"/>
    </location>
    <ligand>
        <name>FMN</name>
        <dbReference type="ChEBI" id="CHEBI:58210"/>
    </ligand>
</feature>
<feature type="mutagenesis site" description="12000-fold decrease in catalytic activity and 50000-fold decrease in catalytic efficiency, with ferricyanide as electron acceptor." evidence="7">
    <original>H</original>
    <variation>Q</variation>
    <location>
        <position position="453"/>
    </location>
</feature>
<feature type="sequence conflict" description="In Ref. 4; AA sequence and 8; AA sequence." evidence="17" ref="4 8">
    <original>Q</original>
    <variation>E</variation>
    <location>
        <position position="165"/>
    </location>
</feature>
<feature type="sequence conflict" description="In Ref. 5; AA sequence." evidence="17" ref="5">
    <original>E</original>
    <variation>Q</variation>
    <location>
        <position position="466"/>
    </location>
</feature>
<feature type="sequence conflict" description="In Ref. 5; AA sequence." evidence="17" ref="5">
    <original>R</original>
    <variation>E</variation>
    <location>
        <position position="513"/>
    </location>
</feature>
<feature type="sequence conflict" description="In Ref. 7; AA sequence." evidence="17" ref="7">
    <original>V</original>
    <variation>P</variation>
    <location>
        <position position="570"/>
    </location>
</feature>
<feature type="helix" evidence="26">
    <location>
        <begin position="95"/>
        <end position="98"/>
    </location>
</feature>
<feature type="strand" evidence="26">
    <location>
        <begin position="104"/>
        <end position="109"/>
    </location>
</feature>
<feature type="strand" evidence="26">
    <location>
        <begin position="112"/>
        <end position="115"/>
    </location>
</feature>
<feature type="turn" evidence="26">
    <location>
        <begin position="117"/>
        <end position="119"/>
    </location>
</feature>
<feature type="helix" evidence="26">
    <location>
        <begin position="120"/>
        <end position="122"/>
    </location>
</feature>
<feature type="helix" evidence="26">
    <location>
        <begin position="127"/>
        <end position="131"/>
    </location>
</feature>
<feature type="turn" evidence="26">
    <location>
        <begin position="132"/>
        <end position="135"/>
    </location>
</feature>
<feature type="helix" evidence="26">
    <location>
        <begin position="139"/>
        <end position="142"/>
    </location>
</feature>
<feature type="helix" evidence="26">
    <location>
        <begin position="143"/>
        <end position="145"/>
    </location>
</feature>
<feature type="helix" evidence="26">
    <location>
        <begin position="150"/>
        <end position="154"/>
    </location>
</feature>
<feature type="helix" evidence="26">
    <location>
        <begin position="157"/>
        <end position="159"/>
    </location>
</feature>
<feature type="strand" evidence="26">
    <location>
        <begin position="160"/>
        <end position="164"/>
    </location>
</feature>
<feature type="strand" evidence="25">
    <location>
        <begin position="170"/>
        <end position="173"/>
    </location>
</feature>
<feature type="helix" evidence="26">
    <location>
        <begin position="183"/>
        <end position="194"/>
    </location>
</feature>
<feature type="helix" evidence="26">
    <location>
        <begin position="199"/>
        <end position="201"/>
    </location>
</feature>
<feature type="helix" evidence="26">
    <location>
        <begin position="205"/>
        <end position="215"/>
    </location>
</feature>
<feature type="helix" evidence="26">
    <location>
        <begin position="218"/>
        <end position="225"/>
    </location>
</feature>
<feature type="strand" evidence="27">
    <location>
        <begin position="228"/>
        <end position="230"/>
    </location>
</feature>
<feature type="helix" evidence="26">
    <location>
        <begin position="232"/>
        <end position="239"/>
    </location>
</feature>
<feature type="helix" evidence="26">
    <location>
        <begin position="240"/>
        <end position="243"/>
    </location>
</feature>
<feature type="strand" evidence="26">
    <location>
        <begin position="261"/>
        <end position="263"/>
    </location>
</feature>
<feature type="strand" evidence="26">
    <location>
        <begin position="266"/>
        <end position="274"/>
    </location>
</feature>
<feature type="helix" evidence="26">
    <location>
        <begin position="280"/>
        <end position="282"/>
    </location>
</feature>
<feature type="turn" evidence="26">
    <location>
        <begin position="285"/>
        <end position="288"/>
    </location>
</feature>
<feature type="helix" evidence="26">
    <location>
        <begin position="289"/>
        <end position="297"/>
    </location>
</feature>
<feature type="strand" evidence="26">
    <location>
        <begin position="298"/>
        <end position="301"/>
    </location>
</feature>
<feature type="strand" evidence="26">
    <location>
        <begin position="305"/>
        <end position="307"/>
    </location>
</feature>
<feature type="helix" evidence="26">
    <location>
        <begin position="315"/>
        <end position="320"/>
    </location>
</feature>
<feature type="strand" evidence="25">
    <location>
        <begin position="325"/>
        <end position="327"/>
    </location>
</feature>
<feature type="strand" evidence="26">
    <location>
        <begin position="329"/>
        <end position="333"/>
    </location>
</feature>
<feature type="helix" evidence="26">
    <location>
        <begin position="339"/>
        <end position="352"/>
    </location>
</feature>
<feature type="strand" evidence="26">
    <location>
        <begin position="357"/>
        <end position="360"/>
    </location>
</feature>
<feature type="helix" evidence="26">
    <location>
        <begin position="370"/>
        <end position="377"/>
    </location>
</feature>
<feature type="helix" evidence="26">
    <location>
        <begin position="398"/>
        <end position="401"/>
    </location>
</feature>
<feature type="strand" evidence="28">
    <location>
        <begin position="404"/>
        <end position="406"/>
    </location>
</feature>
<feature type="helix" evidence="26">
    <location>
        <begin position="412"/>
        <end position="421"/>
    </location>
</feature>
<feature type="strand" evidence="26">
    <location>
        <begin position="426"/>
        <end position="431"/>
    </location>
</feature>
<feature type="helix" evidence="26">
    <location>
        <begin position="434"/>
        <end position="442"/>
    </location>
</feature>
<feature type="strand" evidence="26">
    <location>
        <begin position="446"/>
        <end position="450"/>
    </location>
</feature>
<feature type="turn" evidence="26">
    <location>
        <begin position="453"/>
        <end position="456"/>
    </location>
</feature>
<feature type="helix" evidence="26">
    <location>
        <begin position="464"/>
        <end position="476"/>
    </location>
</feature>
<feature type="turn" evidence="26">
    <location>
        <begin position="477"/>
        <end position="479"/>
    </location>
</feature>
<feature type="helix" evidence="25">
    <location>
        <begin position="481"/>
        <end position="483"/>
    </location>
</feature>
<feature type="strand" evidence="26">
    <location>
        <begin position="484"/>
        <end position="491"/>
    </location>
</feature>
<feature type="helix" evidence="26">
    <location>
        <begin position="495"/>
        <end position="504"/>
    </location>
</feature>
<feature type="strand" evidence="26">
    <location>
        <begin position="507"/>
        <end position="511"/>
    </location>
</feature>
<feature type="helix" evidence="26">
    <location>
        <begin position="513"/>
        <end position="545"/>
    </location>
</feature>
<feature type="helix" evidence="26">
    <location>
        <begin position="550"/>
        <end position="552"/>
    </location>
</feature>
<feature type="helix" evidence="26">
    <location>
        <begin position="555"/>
        <end position="557"/>
    </location>
</feature>
<feature type="turn" evidence="26">
    <location>
        <begin position="561"/>
        <end position="564"/>
    </location>
</feature>
<feature type="helix" evidence="26">
    <location>
        <begin position="574"/>
        <end position="579"/>
    </location>
</feature>
<sequence>MLKYKPLLKISKNCEAAILRASKTRLNTIRAYGSTVPKSKSFEQDSRKRTQSWTALRVGAILAATSSVAYLNWHNGQIDNEPKLDMNKQKISPAEVAKHNKPDDCWVVINGYVYDLTRFLPNHPGGQDVIKFNAGKDVTAIFEPLHAPNVIDKYIAPEKKLGPLQGSMPPELVCPPYAPGETKEDIARKEQLKSLLPPLDNIINLYDFEYLASQTLTKQAWAYYSSGANDEVTHRENHNAYHRIFFKPKILVDVRKVDISTDMLGSHVDVPFYVSATALCKLGNPLEGEKDVARGCGQGVTKVPQMISTLASCSPEEIIEAAPSDKQIQWYQLYVNSDRKITDDLVKNVEKLGVKALFVTVDAPSLGQREKDMKLKFSNTKAGPKAMKKTNVEESQGASRALSKFIDPSLTWKDIEELKKKTKLPIVIKGVQRTEDVIKAAEIGVSGVVLSNHGGRQLDFSRAPIEVLAETMPILEQRNLKDKLEVFVDGGVRRGTDVLKALCLGAKGVGLGRPFLYANSCYGRNGVEKAIEILRDEIEMSMRLLGVTSIAELKPDLLDLSTLKARTVGVPNDVLYNEVYEGPTLTEFEDA</sequence>
<name>CYB2_YEAST</name>
<protein>
    <recommendedName>
        <fullName>L-lactate dehydrogenase (cytochrome)</fullName>
        <ecNumber evidence="10">1.1.2.3</ecNumber>
    </recommendedName>
    <alternativeName>
        <fullName evidence="15 16">Cytochrome b2</fullName>
    </alternativeName>
    <alternativeName>
        <fullName evidence="13 14">Flavocytochrome b2</fullName>
        <shortName evidence="13">FCB2</shortName>
    </alternativeName>
    <alternativeName>
        <fullName>L-lactate ferricytochrome c oxidoreductase</fullName>
        <shortName>L-LCR</shortName>
    </alternativeName>
</protein>
<proteinExistence type="evidence at protein level"/>
<dbReference type="EC" id="1.1.2.3" evidence="10"/>
<dbReference type="EMBL" id="X03215">
    <property type="protein sequence ID" value="CAA26959.1"/>
    <property type="molecule type" value="Genomic_DNA"/>
</dbReference>
<dbReference type="EMBL" id="Z46729">
    <property type="protein sequence ID" value="CAA86721.1"/>
    <property type="molecule type" value="Genomic_DNA"/>
</dbReference>
<dbReference type="EMBL" id="BK006946">
    <property type="protein sequence ID" value="DAA09844.1"/>
    <property type="molecule type" value="Genomic_DNA"/>
</dbReference>
<dbReference type="PIR" id="A24583">
    <property type="entry name" value="CBBY2"/>
</dbReference>
<dbReference type="RefSeq" id="NP_013658.1">
    <property type="nucleotide sequence ID" value="NM_001182412.1"/>
</dbReference>
<dbReference type="PDB" id="1FCB">
    <property type="method" value="X-ray"/>
    <property type="resolution" value="2.40 A"/>
    <property type="chains" value="A/B=81-591"/>
</dbReference>
<dbReference type="PDB" id="1KBI">
    <property type="method" value="X-ray"/>
    <property type="resolution" value="2.30 A"/>
    <property type="chains" value="A/B=81-591"/>
</dbReference>
<dbReference type="PDB" id="1KBJ">
    <property type="method" value="X-ray"/>
    <property type="resolution" value="2.50 A"/>
    <property type="chains" value="A/B=180-591"/>
</dbReference>
<dbReference type="PDB" id="1LCO">
    <property type="method" value="X-ray"/>
    <property type="resolution" value="2.90 A"/>
    <property type="chains" value="A/B=81-591"/>
</dbReference>
<dbReference type="PDB" id="1LDC">
    <property type="method" value="X-ray"/>
    <property type="resolution" value="2.90 A"/>
    <property type="chains" value="A/B=81-591"/>
</dbReference>
<dbReference type="PDB" id="1LTD">
    <property type="method" value="X-ray"/>
    <property type="resolution" value="2.60 A"/>
    <property type="chains" value="A/B=86-591"/>
</dbReference>
<dbReference type="PDB" id="1QCW">
    <property type="method" value="X-ray"/>
    <property type="resolution" value="2.75 A"/>
    <property type="chains" value="A/B=182-591"/>
</dbReference>
<dbReference type="PDB" id="1SZE">
    <property type="method" value="X-ray"/>
    <property type="resolution" value="3.00 A"/>
    <property type="chains" value="A/B=81-591"/>
</dbReference>
<dbReference type="PDB" id="1SZF">
    <property type="method" value="X-ray"/>
    <property type="resolution" value="2.70 A"/>
    <property type="chains" value="A/B=81-591"/>
</dbReference>
<dbReference type="PDB" id="1SZG">
    <property type="method" value="X-ray"/>
    <property type="resolution" value="2.70 A"/>
    <property type="chains" value="A/B=81-591"/>
</dbReference>
<dbReference type="PDB" id="2OZ0">
    <property type="method" value="X-ray"/>
    <property type="resolution" value="2.80 A"/>
    <property type="chains" value="A/B=81-591"/>
</dbReference>
<dbReference type="PDB" id="3KS0">
    <property type="method" value="X-ray"/>
    <property type="resolution" value="2.70 A"/>
    <property type="chains" value="A/B=86-180"/>
</dbReference>
<dbReference type="PDB" id="8HCO">
    <property type="method" value="EM"/>
    <property type="resolution" value="4.10 A"/>
    <property type="chains" value="G=32-125"/>
</dbReference>
<dbReference type="PDBsum" id="1FCB"/>
<dbReference type="PDBsum" id="1KBI"/>
<dbReference type="PDBsum" id="1KBJ"/>
<dbReference type="PDBsum" id="1LCO"/>
<dbReference type="PDBsum" id="1LDC"/>
<dbReference type="PDBsum" id="1LTD"/>
<dbReference type="PDBsum" id="1QCW"/>
<dbReference type="PDBsum" id="1SZE"/>
<dbReference type="PDBsum" id="1SZF"/>
<dbReference type="PDBsum" id="1SZG"/>
<dbReference type="PDBsum" id="2OZ0"/>
<dbReference type="PDBsum" id="3KS0"/>
<dbReference type="PDBsum" id="8HCO"/>
<dbReference type="SMR" id="P00175"/>
<dbReference type="BioGRID" id="35113">
    <property type="interactions" value="88"/>
</dbReference>
<dbReference type="DIP" id="DIP-5810N"/>
<dbReference type="FunCoup" id="P00175">
    <property type="interactions" value="461"/>
</dbReference>
<dbReference type="IntAct" id="P00175">
    <property type="interactions" value="15"/>
</dbReference>
<dbReference type="MINT" id="P00175"/>
<dbReference type="STRING" id="4932.YML054C"/>
<dbReference type="PaxDb" id="4932-YML054C"/>
<dbReference type="PeptideAtlas" id="P00175"/>
<dbReference type="ABCD" id="P00175">
    <property type="antibodies" value="1 sequenced antibody"/>
</dbReference>
<dbReference type="EnsemblFungi" id="YML054C_mRNA">
    <property type="protein sequence ID" value="YML054C"/>
    <property type="gene ID" value="YML054C"/>
</dbReference>
<dbReference type="GeneID" id="854950"/>
<dbReference type="KEGG" id="sce:YML054C"/>
<dbReference type="AGR" id="SGD:S000004518"/>
<dbReference type="SGD" id="S000004518">
    <property type="gene designation" value="CYB2"/>
</dbReference>
<dbReference type="VEuPathDB" id="FungiDB:YML054C"/>
<dbReference type="eggNOG" id="KOG0537">
    <property type="taxonomic scope" value="Eukaryota"/>
</dbReference>
<dbReference type="eggNOG" id="KOG0538">
    <property type="taxonomic scope" value="Eukaryota"/>
</dbReference>
<dbReference type="GeneTree" id="ENSGT00390000018717"/>
<dbReference type="HOGENOM" id="CLU_020639_1_1_1"/>
<dbReference type="InParanoid" id="P00175"/>
<dbReference type="OMA" id="RIWFRPK"/>
<dbReference type="OrthoDB" id="1925334at2759"/>
<dbReference type="BioCyc" id="MetaCyc:YML054C-MONOMER"/>
<dbReference type="BioCyc" id="YEAST:YML054C-MONOMER"/>
<dbReference type="BRENDA" id="1.1.2.3">
    <property type="organism ID" value="984"/>
</dbReference>
<dbReference type="SABIO-RK" id="P00175"/>
<dbReference type="BioGRID-ORCS" id="854950">
    <property type="hits" value="7 hits in 10 CRISPR screens"/>
</dbReference>
<dbReference type="EvolutionaryTrace" id="P00175"/>
<dbReference type="PRO" id="PR:P00175"/>
<dbReference type="Proteomes" id="UP000002311">
    <property type="component" value="Chromosome XIII"/>
</dbReference>
<dbReference type="RNAct" id="P00175">
    <property type="molecule type" value="protein"/>
</dbReference>
<dbReference type="GO" id="GO:0005829">
    <property type="term" value="C:cytosol"/>
    <property type="evidence" value="ECO:0000304"/>
    <property type="project" value="Reactome"/>
</dbReference>
<dbReference type="GO" id="GO:0005743">
    <property type="term" value="C:mitochondrial inner membrane"/>
    <property type="evidence" value="ECO:0000304"/>
    <property type="project" value="Reactome"/>
</dbReference>
<dbReference type="GO" id="GO:0005758">
    <property type="term" value="C:mitochondrial intermembrane space"/>
    <property type="evidence" value="ECO:0000314"/>
    <property type="project" value="SGD"/>
</dbReference>
<dbReference type="GO" id="GO:0005739">
    <property type="term" value="C:mitochondrion"/>
    <property type="evidence" value="ECO:0000314"/>
    <property type="project" value="SGD"/>
</dbReference>
<dbReference type="GO" id="GO:0005634">
    <property type="term" value="C:nucleus"/>
    <property type="evidence" value="ECO:0007005"/>
    <property type="project" value="SGD"/>
</dbReference>
<dbReference type="GO" id="GO:0020037">
    <property type="term" value="F:heme binding"/>
    <property type="evidence" value="ECO:0007669"/>
    <property type="project" value="InterPro"/>
</dbReference>
<dbReference type="GO" id="GO:0004460">
    <property type="term" value="F:L-lactate dehydrogenase (cytochrome) activity"/>
    <property type="evidence" value="ECO:0000314"/>
    <property type="project" value="SGD"/>
</dbReference>
<dbReference type="GO" id="GO:0046872">
    <property type="term" value="F:metal ion binding"/>
    <property type="evidence" value="ECO:0007669"/>
    <property type="project" value="UniProtKB-KW"/>
</dbReference>
<dbReference type="GO" id="GO:0006089">
    <property type="term" value="P:lactate metabolic process"/>
    <property type="evidence" value="ECO:0000315"/>
    <property type="project" value="SGD"/>
</dbReference>
<dbReference type="CDD" id="cd02922">
    <property type="entry name" value="FCB2_FMN"/>
    <property type="match status" value="1"/>
</dbReference>
<dbReference type="FunFam" id="3.10.120.10:FF:000009">
    <property type="entry name" value="Cytochrome b2, mitochondrial, putative"/>
    <property type="match status" value="1"/>
</dbReference>
<dbReference type="FunFam" id="3.20.20.70:FF:000062">
    <property type="entry name" value="Cytochrome b2, mitochondrial, putative"/>
    <property type="match status" value="1"/>
</dbReference>
<dbReference type="Gene3D" id="3.20.20.70">
    <property type="entry name" value="Aldolase class I"/>
    <property type="match status" value="1"/>
</dbReference>
<dbReference type="Gene3D" id="3.10.120.10">
    <property type="entry name" value="Cytochrome b5-like heme/steroid binding domain"/>
    <property type="match status" value="1"/>
</dbReference>
<dbReference type="InterPro" id="IPR013785">
    <property type="entry name" value="Aldolase_TIM"/>
</dbReference>
<dbReference type="InterPro" id="IPR001199">
    <property type="entry name" value="Cyt_B5-like_heme/steroid-bd"/>
</dbReference>
<dbReference type="InterPro" id="IPR036400">
    <property type="entry name" value="Cyt_B5-like_heme/steroid_sf"/>
</dbReference>
<dbReference type="InterPro" id="IPR018506">
    <property type="entry name" value="Cyt_B5_heme-BS"/>
</dbReference>
<dbReference type="InterPro" id="IPR000262">
    <property type="entry name" value="FMN-dep_DH"/>
</dbReference>
<dbReference type="InterPro" id="IPR037396">
    <property type="entry name" value="FMN_HAD"/>
</dbReference>
<dbReference type="InterPro" id="IPR008259">
    <property type="entry name" value="FMN_hydac_DH_AS"/>
</dbReference>
<dbReference type="InterPro" id="IPR037458">
    <property type="entry name" value="L-MDH/L-LDH_FMN-bd"/>
</dbReference>
<dbReference type="PANTHER" id="PTHR10578:SF148">
    <property type="entry name" value="L-LACTATE DEHYDROGENASE (CYTOCHROME)"/>
    <property type="match status" value="1"/>
</dbReference>
<dbReference type="PANTHER" id="PTHR10578">
    <property type="entry name" value="S -2-HYDROXY-ACID OXIDASE-RELATED"/>
    <property type="match status" value="1"/>
</dbReference>
<dbReference type="Pfam" id="PF00173">
    <property type="entry name" value="Cyt-b5"/>
    <property type="match status" value="1"/>
</dbReference>
<dbReference type="Pfam" id="PF01070">
    <property type="entry name" value="FMN_dh"/>
    <property type="match status" value="1"/>
</dbReference>
<dbReference type="PRINTS" id="PR00363">
    <property type="entry name" value="CYTOCHROMEB5"/>
</dbReference>
<dbReference type="SMART" id="SM01117">
    <property type="entry name" value="Cyt-b5"/>
    <property type="match status" value="1"/>
</dbReference>
<dbReference type="SUPFAM" id="SSF55856">
    <property type="entry name" value="Cytochrome b5-like heme/steroid binding domain"/>
    <property type="match status" value="1"/>
</dbReference>
<dbReference type="SUPFAM" id="SSF51395">
    <property type="entry name" value="FMN-linked oxidoreductases"/>
    <property type="match status" value="1"/>
</dbReference>
<dbReference type="PROSITE" id="PS00191">
    <property type="entry name" value="CYTOCHROME_B5_1"/>
    <property type="match status" value="1"/>
</dbReference>
<dbReference type="PROSITE" id="PS50255">
    <property type="entry name" value="CYTOCHROME_B5_2"/>
    <property type="match status" value="1"/>
</dbReference>
<dbReference type="PROSITE" id="PS00557">
    <property type="entry name" value="FMN_HYDROXY_ACID_DH_1"/>
    <property type="match status" value="1"/>
</dbReference>
<dbReference type="PROSITE" id="PS51349">
    <property type="entry name" value="FMN_HYDROXY_ACID_DH_2"/>
    <property type="match status" value="1"/>
</dbReference>
<comment type="function">
    <text evidence="4 10 11">Catalyzes the oxidation of (S)-lactate (L-lactate) to pyruvate with subsequent transfer of electrons to cytochrome c (PubMed:11914072). Is involved in the utilization of (S)-lactate as a sole source of carbon for growth (PubMed:3004948). Can also use ferricyanide as an electron acceptor in vitro (PubMed:3004948, PubMed:4593578).</text>
</comment>
<comment type="catalytic activity">
    <reaction evidence="4 19 20">
        <text>(S)-lactate + 2 Fe(III)-[cytochrome c] = 2 Fe(II)-[cytochrome c] + pyruvate + 2 H(+)</text>
        <dbReference type="Rhea" id="RHEA:19909"/>
        <dbReference type="Rhea" id="RHEA-COMP:10350"/>
        <dbReference type="Rhea" id="RHEA-COMP:14399"/>
        <dbReference type="ChEBI" id="CHEBI:15361"/>
        <dbReference type="ChEBI" id="CHEBI:15378"/>
        <dbReference type="ChEBI" id="CHEBI:16651"/>
        <dbReference type="ChEBI" id="CHEBI:29033"/>
        <dbReference type="ChEBI" id="CHEBI:29034"/>
        <dbReference type="EC" id="1.1.2.3"/>
    </reaction>
    <physiologicalReaction direction="left-to-right" evidence="10">
        <dbReference type="Rhea" id="RHEA:19910"/>
    </physiologicalReaction>
</comment>
<comment type="cofactor">
    <cofactor evidence="4 9">
        <name>FMN</name>
        <dbReference type="ChEBI" id="CHEBI:58210"/>
    </cofactor>
</comment>
<comment type="cofactor">
    <cofactor evidence="4 7 9">
        <name>heme b</name>
        <dbReference type="ChEBI" id="CHEBI:60344"/>
    </cofactor>
    <text evidence="4">Binds 1 heme b (iron(II)-protoporphyrin IX) group non-covalently per subunit.</text>
</comment>
<comment type="biophysicochemical properties">
    <kinetics>
        <KM evidence="4">0.49 mM for (S)-lactate</KM>
        <KM evidence="4">10 uM for cytochrome c</KM>
        <text evidence="4">kcat is 207 sec(-1) with cytochrome c as electron acceptor. kcat is 400 sec(-1) with ferricyanide as electron acceptor.</text>
    </kinetics>
</comment>
<comment type="subunit">
    <text evidence="11">Homotetramer.</text>
</comment>
<comment type="subcellular location">
    <subcellularLocation>
        <location evidence="3 8">Mitochondrion intermembrane space</location>
    </subcellularLocation>
</comment>
<comment type="induction">
    <text>By L-lactate. Induced during respiratory adaptation.</text>
</comment>
<comment type="domain">
    <text evidence="4 9">Consists of two discrete domains, an N-terminal cytochrome b domain from residues 81 to 179 and a C-terminal flavin-binding domain from residues 180 to 566. In addition there is an extended C-terminal tail (PubMed:11914072, PubMed:2329585). The cytochrome b domain is required for efficient cytochrome c reduction (PubMed:11914072).</text>
</comment>
<comment type="disruption phenotype">
    <text evidence="10">Inactivation of this gene leads to a deficiency in L-lactate dehydrogenase activity and consequently to the inability to use L-lactate as a sole source of carbon.</text>
</comment>
<comment type="miscellaneous">
    <text evidence="5">Present with 4590 molecules/cell in log phase SD medium.</text>
</comment>
<comment type="similarity">
    <text evidence="17">In the N-terminal section; belongs to the cytochrome b5 family.</text>
</comment>
<comment type="similarity">
    <text evidence="17">In the C-terminal section; belongs to the FMN-dependent alpha-hydroxy acid dehydrogenase family.</text>
</comment>
<comment type="online information" name="Worthington enzyme manual">
    <link uri="https://www.worthington-biochem.com/YLDHS/"/>
</comment>
<gene>
    <name type="primary">CYB2</name>
    <name type="ordered locus">YML054C</name>
    <name type="ORF">YM9958.08C</name>
</gene>
<organism>
    <name type="scientific">Saccharomyces cerevisiae (strain ATCC 204508 / S288c)</name>
    <name type="common">Baker's yeast</name>
    <dbReference type="NCBI Taxonomy" id="559292"/>
    <lineage>
        <taxon>Eukaryota</taxon>
        <taxon>Fungi</taxon>
        <taxon>Dikarya</taxon>
        <taxon>Ascomycota</taxon>
        <taxon>Saccharomycotina</taxon>
        <taxon>Saccharomycetes</taxon>
        <taxon>Saccharomycetales</taxon>
        <taxon>Saccharomycetaceae</taxon>
        <taxon>Saccharomyces</taxon>
    </lineage>
</organism>